<name>TCDA_CLONO</name>
<feature type="chain" id="PRO_0000451192" description="Toxin A">
    <location>
        <begin position="1"/>
        <end position="2178"/>
    </location>
</feature>
<feature type="chain" id="PRO_0000451193" description="N-acetylglucosaminyltransferase TcdA" evidence="2">
    <location>
        <begin position="1"/>
        <end position="548"/>
    </location>
</feature>
<feature type="domain" description="GT44" evidence="4">
    <location>
        <begin position="98"/>
        <end position="474"/>
    </location>
</feature>
<feature type="domain" description="Peptidase C80" evidence="6">
    <location>
        <begin position="574"/>
        <end position="787"/>
    </location>
</feature>
<feature type="repeat" description="Cell wall-binding 1" evidence="5">
    <location>
        <begin position="1799"/>
        <end position="1818"/>
    </location>
</feature>
<feature type="repeat" description="Cell wall-binding 2" evidence="5">
    <location>
        <begin position="1820"/>
        <end position="1839"/>
    </location>
</feature>
<feature type="repeat" description="Cell wall-binding 3" evidence="5">
    <location>
        <begin position="1870"/>
        <end position="1889"/>
    </location>
</feature>
<feature type="repeat" description="Cell wall-binding 4" evidence="5">
    <location>
        <begin position="1890"/>
        <end position="1909"/>
    </location>
</feature>
<feature type="repeat" description="Cell wall-binding 5" evidence="5">
    <location>
        <begin position="1910"/>
        <end position="1929"/>
    </location>
</feature>
<feature type="repeat" description="Cell wall-binding 6" evidence="5">
    <location>
        <begin position="1931"/>
        <end position="1950"/>
    </location>
</feature>
<feature type="repeat" description="Cell wall-binding 7" evidence="5">
    <location>
        <begin position="1951"/>
        <end position="1970"/>
    </location>
</feature>
<feature type="repeat" description="Cell wall-binding 8" evidence="5">
    <location>
        <begin position="2004"/>
        <end position="2023"/>
    </location>
</feature>
<feature type="repeat" description="Cell wall-binding 9" evidence="5">
    <location>
        <begin position="2024"/>
        <end position="2043"/>
    </location>
</feature>
<feature type="repeat" description="Cell wall-binding 10" evidence="5">
    <location>
        <begin position="2045"/>
        <end position="2060"/>
    </location>
</feature>
<feature type="repeat" description="Cell wall-binding 11" evidence="5">
    <location>
        <begin position="2064"/>
        <end position="2083"/>
    </location>
</feature>
<feature type="repeat" description="Cell wall-binding 12" evidence="5">
    <location>
        <begin position="2114"/>
        <end position="2133"/>
    </location>
</feature>
<feature type="repeat" description="Cell wall-binding 13" evidence="5">
    <location>
        <begin position="2134"/>
        <end position="2153"/>
    </location>
</feature>
<feature type="repeat" description="Cell wall-binding 14" evidence="5">
    <location>
        <begin position="2155"/>
        <end position="2174"/>
    </location>
</feature>
<feature type="region of interest" description="Four-helical bundle" evidence="3">
    <location>
        <begin position="1"/>
        <end position="93"/>
    </location>
</feature>
<feature type="region of interest" description="Glucosyltransferase region" evidence="1">
    <location>
        <begin position="98"/>
        <end position="474"/>
    </location>
</feature>
<feature type="region of interest" description="N-acetylglucosaminyltransferase region" evidence="2">
    <location>
        <begin position="98"/>
        <end position="474"/>
    </location>
</feature>
<feature type="region of interest" description="Autoprocessing region" evidence="2">
    <location>
        <begin position="549"/>
        <end position="806"/>
    </location>
</feature>
<feature type="region of interest" description="Translocation region" evidence="1">
    <location>
        <begin position="807"/>
        <end position="1485"/>
    </location>
</feature>
<feature type="active site" description="For protease activity" evidence="6">
    <location>
        <position position="657"/>
    </location>
</feature>
<feature type="active site" description="Nucleophile; for protease activity" evidence="6">
    <location>
        <position position="707"/>
    </location>
</feature>
<feature type="binding site" evidence="2">
    <location>
        <begin position="103"/>
        <end position="105"/>
    </location>
    <ligand>
        <name>UDP-N-acetyl-alpha-D-glucosamine</name>
        <dbReference type="ChEBI" id="CHEBI:57705"/>
    </ligand>
</feature>
<feature type="binding site" evidence="2">
    <location>
        <position position="141"/>
    </location>
    <ligand>
        <name>UDP-N-acetyl-alpha-D-glucosamine</name>
        <dbReference type="ChEBI" id="CHEBI:57705"/>
    </ligand>
</feature>
<feature type="binding site" evidence="2">
    <location>
        <begin position="267"/>
        <end position="271"/>
    </location>
    <ligand>
        <name>UDP-N-acetyl-alpha-D-glucosamine</name>
        <dbReference type="ChEBI" id="CHEBI:57705"/>
    </ligand>
</feature>
<feature type="binding site" evidence="2">
    <location>
        <begin position="284"/>
        <end position="286"/>
    </location>
    <ligand>
        <name>UDP-N-acetyl-alpha-D-glucosamine</name>
        <dbReference type="ChEBI" id="CHEBI:57705"/>
    </ligand>
</feature>
<feature type="binding site" evidence="2">
    <location>
        <position position="284"/>
    </location>
    <ligand>
        <name>Mg(2+)</name>
        <dbReference type="ChEBI" id="CHEBI:18420"/>
    </ligand>
</feature>
<feature type="binding site" evidence="2">
    <location>
        <position position="286"/>
    </location>
    <ligand>
        <name>Mg(2+)</name>
        <dbReference type="ChEBI" id="CHEBI:18420"/>
    </ligand>
</feature>
<feature type="binding site" evidence="2">
    <location>
        <position position="520"/>
    </location>
    <ligand>
        <name>Mg(2+)</name>
        <dbReference type="ChEBI" id="CHEBI:18420"/>
    </ligand>
</feature>
<feature type="binding site" evidence="2">
    <location>
        <begin position="523"/>
        <end position="525"/>
    </location>
    <ligand>
        <name>UDP-N-acetyl-alpha-D-glucosamine</name>
        <dbReference type="ChEBI" id="CHEBI:57705"/>
    </ligand>
</feature>
<feature type="binding site" evidence="1">
    <location>
        <position position="557"/>
    </location>
    <ligand>
        <name>1D-myo-inositol hexakisphosphate</name>
        <dbReference type="ChEBI" id="CHEBI:58130"/>
    </ligand>
</feature>
<feature type="binding site" evidence="1">
    <location>
        <position position="607"/>
    </location>
    <ligand>
        <name>1D-myo-inositol hexakisphosphate</name>
        <dbReference type="ChEBI" id="CHEBI:58130"/>
    </ligand>
</feature>
<feature type="binding site" evidence="1">
    <location>
        <position position="651"/>
    </location>
    <ligand>
        <name>1D-myo-inositol hexakisphosphate</name>
        <dbReference type="ChEBI" id="CHEBI:58130"/>
    </ligand>
</feature>
<feature type="binding site" evidence="1">
    <location>
        <begin position="758"/>
        <end position="759"/>
    </location>
    <ligand>
        <name>1D-myo-inositol hexakisphosphate</name>
        <dbReference type="ChEBI" id="CHEBI:58130"/>
    </ligand>
</feature>
<feature type="binding site" evidence="1">
    <location>
        <position position="782"/>
    </location>
    <ligand>
        <name>1D-myo-inositol hexakisphosphate</name>
        <dbReference type="ChEBI" id="CHEBI:58130"/>
    </ligand>
</feature>
<feature type="site" description="Cleavage; by autolysis" evidence="2">
    <location>
        <begin position="548"/>
        <end position="549"/>
    </location>
</feature>
<feature type="mutagenesis site" description="Changes substrate preference and promotes glucosyltransferase activity instead of N-acetylglucosaminyltransferase activity." evidence="7">
    <original>SNA</original>
    <variation>INQ</variation>
    <location>
        <begin position="385"/>
        <end position="387"/>
    </location>
</feature>
<feature type="turn" evidence="17">
    <location>
        <begin position="6"/>
        <end position="11"/>
    </location>
</feature>
<feature type="helix" evidence="17">
    <location>
        <begin position="21"/>
        <end position="35"/>
    </location>
</feature>
<feature type="helix" evidence="17">
    <location>
        <begin position="42"/>
        <end position="62"/>
    </location>
</feature>
<feature type="helix" evidence="17">
    <location>
        <begin position="69"/>
        <end position="90"/>
    </location>
</feature>
<feature type="strand" evidence="17">
    <location>
        <begin position="91"/>
        <end position="93"/>
    </location>
</feature>
<feature type="strand" evidence="17">
    <location>
        <begin position="98"/>
        <end position="103"/>
    </location>
</feature>
<feature type="helix" evidence="17">
    <location>
        <begin position="111"/>
        <end position="123"/>
    </location>
</feature>
<feature type="strand" evidence="17">
    <location>
        <begin position="127"/>
        <end position="133"/>
    </location>
</feature>
<feature type="helix" evidence="17">
    <location>
        <begin position="140"/>
        <end position="157"/>
    </location>
</feature>
<feature type="helix" evidence="17">
    <location>
        <begin position="161"/>
        <end position="163"/>
    </location>
</feature>
<feature type="turn" evidence="17">
    <location>
        <begin position="164"/>
        <end position="166"/>
    </location>
</feature>
<feature type="helix" evidence="17">
    <location>
        <begin position="173"/>
        <end position="195"/>
    </location>
</feature>
<feature type="turn" evidence="17">
    <location>
        <begin position="196"/>
        <end position="198"/>
    </location>
</feature>
<feature type="helix" evidence="17">
    <location>
        <begin position="201"/>
        <end position="213"/>
    </location>
</feature>
<feature type="helix" evidence="17">
    <location>
        <begin position="217"/>
        <end position="234"/>
    </location>
</feature>
<feature type="helix" evidence="17">
    <location>
        <begin position="239"/>
        <end position="241"/>
    </location>
</feature>
<feature type="helix" evidence="17">
    <location>
        <begin position="247"/>
        <end position="258"/>
    </location>
</feature>
<feature type="helix" evidence="17">
    <location>
        <begin position="263"/>
        <end position="278"/>
    </location>
</feature>
<feature type="strand" evidence="17">
    <location>
        <begin position="280"/>
        <end position="283"/>
    </location>
</feature>
<feature type="helix" evidence="17">
    <location>
        <begin position="293"/>
        <end position="298"/>
    </location>
</feature>
<feature type="helix" evidence="17">
    <location>
        <begin position="307"/>
        <end position="321"/>
    </location>
</feature>
<feature type="strand" evidence="17">
    <location>
        <begin position="331"/>
        <end position="336"/>
    </location>
</feature>
<feature type="helix" evidence="17">
    <location>
        <begin position="338"/>
        <end position="349"/>
    </location>
</feature>
<feature type="helix" evidence="17">
    <location>
        <begin position="353"/>
        <end position="356"/>
    </location>
</feature>
<feature type="strand" evidence="17">
    <location>
        <begin position="371"/>
        <end position="376"/>
    </location>
</feature>
<feature type="strand" evidence="17">
    <location>
        <begin position="382"/>
        <end position="391"/>
    </location>
</feature>
<feature type="helix" evidence="17">
    <location>
        <begin position="396"/>
        <end position="422"/>
    </location>
</feature>
<feature type="helix" evidence="17">
    <location>
        <begin position="426"/>
        <end position="440"/>
    </location>
</feature>
<feature type="helix" evidence="17">
    <location>
        <begin position="447"/>
        <end position="453"/>
    </location>
</feature>
<feature type="helix" evidence="17">
    <location>
        <begin position="454"/>
        <end position="458"/>
    </location>
</feature>
<feature type="turn" evidence="17">
    <location>
        <begin position="459"/>
        <end position="461"/>
    </location>
</feature>
<feature type="helix" evidence="17">
    <location>
        <begin position="470"/>
        <end position="472"/>
    </location>
</feature>
<feature type="turn" evidence="17">
    <location>
        <begin position="473"/>
        <end position="475"/>
    </location>
</feature>
<feature type="helix" evidence="17">
    <location>
        <begin position="477"/>
        <end position="488"/>
    </location>
</feature>
<feature type="helix" evidence="17">
    <location>
        <begin position="500"/>
        <end position="503"/>
    </location>
</feature>
<feature type="helix" evidence="17">
    <location>
        <begin position="504"/>
        <end position="506"/>
    </location>
</feature>
<feature type="helix" evidence="17">
    <location>
        <begin position="510"/>
        <end position="512"/>
    </location>
</feature>
<feature type="helix" evidence="17">
    <location>
        <begin position="518"/>
        <end position="523"/>
    </location>
</feature>
<feature type="helix" evidence="17">
    <location>
        <begin position="524"/>
        <end position="526"/>
    </location>
</feature>
<feature type="helix" evidence="17">
    <location>
        <begin position="535"/>
        <end position="538"/>
    </location>
</feature>
<evidence type="ECO:0000250" key="1">
    <source>
        <dbReference type="UniProtKB" id="P16154"/>
    </source>
</evidence>
<evidence type="ECO:0000250" key="2">
    <source>
        <dbReference type="UniProtKB" id="P18177"/>
    </source>
</evidence>
<evidence type="ECO:0000250" key="3">
    <source>
        <dbReference type="UniProtKB" id="Q46342"/>
    </source>
</evidence>
<evidence type="ECO:0000255" key="4"/>
<evidence type="ECO:0000255" key="5">
    <source>
        <dbReference type="PROSITE-ProRule" id="PRU00591"/>
    </source>
</evidence>
<evidence type="ECO:0000255" key="6">
    <source>
        <dbReference type="PROSITE-ProRule" id="PRU01107"/>
    </source>
</evidence>
<evidence type="ECO:0000269" key="7">
    <source>
    </source>
</evidence>
<evidence type="ECO:0000269" key="8">
    <source>
    </source>
</evidence>
<evidence type="ECO:0000269" key="9">
    <source>
    </source>
</evidence>
<evidence type="ECO:0000269" key="10">
    <source>
    </source>
</evidence>
<evidence type="ECO:0000303" key="11">
    <source>
    </source>
</evidence>
<evidence type="ECO:0000303" key="12">
    <source>
    </source>
</evidence>
<evidence type="ECO:0000305" key="13"/>
<evidence type="ECO:0000305" key="14">
    <source>
    </source>
</evidence>
<evidence type="ECO:0000312" key="15">
    <source>
        <dbReference type="EMBL" id="CAA88565.1"/>
    </source>
</evidence>
<evidence type="ECO:0007744" key="16">
    <source>
        <dbReference type="PDB" id="2VK9"/>
    </source>
</evidence>
<evidence type="ECO:0007829" key="17">
    <source>
        <dbReference type="PDB" id="2VK9"/>
    </source>
</evidence>
<keyword id="KW-0002">3D-structure</keyword>
<keyword id="KW-0068">Autocatalytic cleavage</keyword>
<keyword id="KW-0260">Enterotoxin</keyword>
<keyword id="KW-0328">Glycosyltransferase</keyword>
<keyword id="KW-1032">Host cell membrane</keyword>
<keyword id="KW-1035">Host cytoplasm</keyword>
<keyword id="KW-1039">Host endosome</keyword>
<keyword id="KW-1043">Host membrane</keyword>
<keyword id="KW-0378">Hydrolase</keyword>
<keyword id="KW-0446">Lipid-binding</keyword>
<keyword id="KW-0460">Magnesium</keyword>
<keyword id="KW-0464">Manganese</keyword>
<keyword id="KW-0472">Membrane</keyword>
<keyword id="KW-0479">Metal-binding</keyword>
<keyword id="KW-0645">Protease</keyword>
<keyword id="KW-0677">Repeat</keyword>
<keyword id="KW-0964">Secreted</keyword>
<keyword id="KW-0788">Thiol protease</keyword>
<keyword id="KW-0800">Toxin</keyword>
<keyword id="KW-0808">Transferase</keyword>
<keyword id="KW-0843">Virulence</keyword>
<comment type="function">
    <molecule>Toxin A</molecule>
    <text evidence="2 8">Precursor of a cytotoxin, which enters into host cells and mediates autoprocessing to release the active toxin (N-acetylglucosaminyltransferase TcdA) into the host cytosol (By similarity). Once entered into host cells, acidification in the endosome promotes the membrane insertion of the translocation region and formation of a pore, leading to translocation of the GT44 and peptidase C80 domains across the endosomal membrane (By similarity). This activates the peptidase C80 domain and autocatalytic processing, releasing the N-terminal part (N-acetylglucosaminyltransferase TcdA), which constitutes the active part of the toxin, in the cytosol (PubMed:17334356).</text>
</comment>
<comment type="function">
    <molecule>N-acetylglucosaminyltransferase TcdA</molecule>
    <text evidence="7 10">Active form of the toxin, which is released into the host cytosol following autoprocessing and inactivates small GTPases (PubMed:16157585, PubMed:8810274). Acts by mediating monoglycosylation of small GTPases of the Rho family (Rac1, RhoA, RhoG and Cdc42) in host cells at the conserved threonine residue located in the switch I region ('Thr-37/35'), using UDP-N-acetyl-alpha-D-glucosamine as the sugar donor (PubMed:16157585, PubMed:8810274). Monoglycosylation of host small GTPases completely prevents the recognition of the downstream effector, blocking the GTPases in their inactive form, leading to actin cytoskeleton disruption and cell death (PubMed:8810274).</text>
</comment>
<comment type="catalytic activity">
    <molecule>N-acetylglucosaminyltransferase TcdA</molecule>
    <reaction evidence="7 10">
        <text>L-threonyl-[protein] + UDP-N-acetyl-alpha-D-glucosamine = 3-O-(N-acetyl-alpha-D-glucosaminyl)-L-threonyl-[protein] + UDP + H(+)</text>
        <dbReference type="Rhea" id="RHEA:64688"/>
        <dbReference type="Rhea" id="RHEA-COMP:11060"/>
        <dbReference type="Rhea" id="RHEA-COMP:16657"/>
        <dbReference type="ChEBI" id="CHEBI:15378"/>
        <dbReference type="ChEBI" id="CHEBI:30013"/>
        <dbReference type="ChEBI" id="CHEBI:57705"/>
        <dbReference type="ChEBI" id="CHEBI:58223"/>
        <dbReference type="ChEBI" id="CHEBI:156086"/>
    </reaction>
    <physiologicalReaction direction="left-to-right" evidence="7 10">
        <dbReference type="Rhea" id="RHEA:64689"/>
    </physiologicalReaction>
</comment>
<comment type="cofactor">
    <molecule>N-acetylglucosaminyltransferase TcdA</molecule>
    <cofactor evidence="2">
        <name>Mn(2+)</name>
        <dbReference type="ChEBI" id="CHEBI:29035"/>
    </cofactor>
    <cofactor evidence="2">
        <name>Mg(2+)</name>
        <dbReference type="ChEBI" id="CHEBI:18420"/>
    </cofactor>
    <text evidence="1">Has higher activity with Mn(2+), but most likely uses Mg(2+) in host cells. Required for glucosyltransferase activity.</text>
</comment>
<comment type="activity regulation">
    <molecule>Toxin A</molecule>
    <text evidence="1">Protease activity is activated upon binding to 1D-myo-inositol hexakisphosphate (InsP6), which induces conformational reorganization.</text>
</comment>
<comment type="biophysicochemical properties">
    <molecule>N-acetylglucosaminyltransferase TcdA</molecule>
    <kinetics>
        <KM evidence="7">307 uM for UDP-alpha-D-glucose</KM>
        <KM evidence="7">17 uM for UDP-N-acetyl-alpha-D-glucosamine</KM>
        <text evidence="7">kcat is 282 h(-1) with UDP-alpha-D-glucose as substrate (PubMed:16157585). kcat is 2800 h(-1) with UDP-N-acetyl-alpha-D-glucosamine as substrate (PubMed:16157585).</text>
    </kinetics>
</comment>
<comment type="subcellular location">
    <molecule>Toxin A</molecule>
    <subcellularLocation>
        <location evidence="2">Secreted</location>
    </subcellularLocation>
    <subcellularLocation>
        <location evidence="14">Host endosome membrane</location>
    </subcellularLocation>
    <text evidence="2 9">Secreted from C.novyi cell into the extracellular environment via help of holin-like protein TcdE/UtxA (By similarity). Binds to the cell surface receptors via the receptor-binding region and enters the cells via clathrin-mediated endocytosis (PubMed:20498856). Acidification in the endosome triggers conformational changes that promote the membrane insertion of the translocation region, allowing formation of a pore, leading to translocation of the GT44 and peptidase C80 domains across the endosomal membrane (By similarity). 1D-myo-inositol hexakisphosphate-binding (InsP6) activates the peptidase C80 domain and autoprocessing, generating the N-acetylglucosaminyltransferase TcdA form, which is released in the host cytosol (By similarity).</text>
</comment>
<comment type="subcellular location">
    <molecule>N-acetylglucosaminyltransferase TcdA</molecule>
    <subcellularLocation>
        <location evidence="2">Host cytoplasm</location>
        <location evidence="2">Host cytosol</location>
    </subcellularLocation>
    <subcellularLocation>
        <location evidence="3">Host cell membrane</location>
        <topology evidence="3">Peripheral membrane protein</topology>
        <orientation evidence="3">Cytoplasmic side</orientation>
    </subcellularLocation>
    <text evidence="3">Binding to phospholipids, such as phosphatidylserine and phosphatidic acid promotes localization to the inner face of the cell membrane close to its membrane anchored substrates (small GTPases).</text>
</comment>
<comment type="domain">
    <molecule>Toxin A</molecule>
    <text evidence="11">Consists of 4 functional domains: (1) the N-terminal GT44 domain (glycosyltransferase, also named GTD), which mediates glucosylation of host small GTPases, (2) an autoprocessing region that catalyzes autoprocessing to release the N-terminal GT44 domain in the host cytosol, (3) the translocation region that forms a pore to promote translocation of the GT44 and peptidase C80 domains across the endosomal membrane and (4) the receptor-binding (CROPS) region that mediates binding to host cells and contribute to entry into cells.</text>
</comment>
<comment type="domain">
    <molecule>Toxin A</molecule>
    <text evidence="2">The receptor-binding (CROPS) region is dynamic and can have open and closed conformations depending of the pH: has an open conformation at endosomal pH and a closed conformation at neutral pH.</text>
</comment>
<comment type="domain">
    <molecule>Toxin A</molecule>
    <text evidence="1">The cell wall-binding repeats bind carbohydrates, probably contributing to entry into cells.</text>
</comment>
<comment type="domain">
    <molecule>N-acetylglucosaminyltransferase TcdA</molecule>
    <text evidence="2 3">The four-helical bundle region mediates binding to phospholipids, such as phosphatidylserine and phosphatidic acid (By similarity). This promotes localization to the inner face of the cell membrane close to small GTPases (By similarity).</text>
</comment>
<comment type="PTM">
    <molecule>Toxin A</molecule>
    <text evidence="8">Undergoes autocatalytic cleavage to release the N-terminal part (N-acetylglucosaminyltransferase TcdA), which constitutes the active part of the toxin, in the host cytosol (PubMed:17334356). 1D-myo-inositol hexakisphosphate-binding (InsP6) activates the peptidase C80 domain and promotes autoprocessing (PubMed:17334356).</text>
</comment>
<comment type="similarity">
    <text evidence="13">Belongs to the clostridial glucosylating toxin (LCGT) family.</text>
</comment>
<proteinExistence type="evidence at protein level"/>
<protein>
    <recommendedName>
        <fullName evidence="12">Toxin A</fullName>
        <ecNumber evidence="8">3.4.22.-</ecNumber>
    </recommendedName>
    <component>
        <recommendedName>
            <fullName evidence="13">N-acetylglucosaminyltransferase TcdA</fullName>
            <ecNumber evidence="7 10">2.4.1.-</ecNumber>
        </recommendedName>
    </component>
</protein>
<gene>
    <name type="primary">tcdA</name>
    <name evidence="12" type="synonym">toxA</name>
</gene>
<reference key="1">
    <citation type="journal article" date="1995" name="Mol. Gen. Genet.">
        <title>Sequencing and analysis of the gene encoding the alpha-toxin of Clostridium novyi proves its homology to toxins A and B of Clostridium difficile.</title>
        <authorList>
            <person name="Hofmann F."/>
            <person name="Herrmann A."/>
            <person name="Habermann E."/>
            <person name="von Eichel-Streiber C."/>
        </authorList>
    </citation>
    <scope>NUCLEOTIDE SEQUENCE [GENOMIC DNA]</scope>
    <source>
        <strain evidence="15">ATCC 19402</strain>
    </source>
</reference>
<reference key="2">
    <citation type="journal article" date="1996" name="J. Biol. Chem.">
        <title>Clostridium novyi alpha-toxin-catalyzed incorporation of GlcNAc into Rho subfamily proteins.</title>
        <authorList>
            <person name="Selzer J."/>
            <person name="Hofmann F."/>
            <person name="Rex G."/>
            <person name="Wilm M."/>
            <person name="Mann M."/>
            <person name="Just I."/>
            <person name="Aktories K."/>
        </authorList>
    </citation>
    <scope>FUNCTION (N-ACETYLGLUCOSAMINYLTRANSFERASE TCDA)</scope>
    <scope>CATALYTIC ACTIVITY (N-ACETYLGLUCOSAMINYLTRANSFERASE TCDA)</scope>
</reference>
<reference key="3">
    <citation type="journal article" date="2005" name="J. Biol. Chem.">
        <title>Change of the donor substrate specificity of Clostridium difficile toxin B by site-directed mutagenesis.</title>
        <authorList>
            <person name="Jank T."/>
            <person name="Reinert D.J."/>
            <person name="Giesemann T."/>
            <person name="Schulz G.E."/>
            <person name="Aktories K."/>
        </authorList>
    </citation>
    <scope>FUNCTION (N-ACETYLGLUCOSAMINYLTRANSFERASE TCDA)</scope>
    <scope>CATALYTIC ACTIVITY (N-ACETYLGLUCOSAMINYLTRANSFERASE TCDA)</scope>
    <scope>BIOPHYSICOCHEMICAL PROPERTIES (N-ACETYLGLUCOSAMINYLTRANSFERASE TCDA)</scope>
    <scope>MUTAGENESIS OF 385-SER--ALA-387</scope>
</reference>
<reference key="4">
    <citation type="journal article" date="2010" name="PLoS ONE">
        <title>Clostridial glucosylating toxins enter cells via clathrin-mediated endocytosis.</title>
        <authorList>
            <person name="Papatheodorou P."/>
            <person name="Zamboglou C."/>
            <person name="Genisyuerek S."/>
            <person name="Guttenberg G."/>
            <person name="Aktories K."/>
        </authorList>
    </citation>
    <scope>SUBCELLULAR LOCATION (TOXIN A)</scope>
</reference>
<reference key="5">
    <citation type="journal article" date="2007" name="Nature">
        <title>Autocatalytic cleavage of Clostridium difficile toxin B.</title>
        <authorList>
            <person name="Reineke J."/>
            <person name="Tenzer S."/>
            <person name="Rupnik M."/>
            <person name="Koschinski A."/>
            <person name="Hasselmayer O."/>
            <person name="Schrattenholz A."/>
            <person name="Schild H."/>
            <person name="von Eichel-Streiber C."/>
        </authorList>
    </citation>
    <scope>FUNCTION (TOXIN A)</scope>
    <scope>PROTEOLYTIC CLEAVAGE (TOXIN A)</scope>
    <scope>ACTIVITY REGULATION (TOXIN A)</scope>
</reference>
<reference key="6">
    <citation type="journal article" date="2018" name="Toxicon">
        <title>Clostridium difficile and Clostridium sordellii toxins, proinflammatory versus anti-inflammatory response.</title>
        <authorList>
            <person name="Popoff M.R."/>
        </authorList>
    </citation>
    <scope>REVIEW</scope>
</reference>
<reference evidence="16" key="7">
    <citation type="journal article" date="2008" name="J. Mol. Biol.">
        <title>Conformational changes and reaction of clostridial glycosylating toxins.</title>
        <authorList>
            <person name="Ziegler M.O."/>
            <person name="Jank T."/>
            <person name="Aktories K."/>
            <person name="Schulz G.E."/>
        </authorList>
    </citation>
    <scope>X-RAY CRYSTALLOGRAPHY (2.85 ANGSTROMS) OF 1-551</scope>
</reference>
<sequence>MLITREQLMKIASIPLKRKEPEYNLILDALENFNRDIEGTSVKEIYSKLSKLNELVDNYQTKYPSSGRNLALENFRDSLYSELRELIKNSRTSTIASKNLSFIWIGGPISDQSLEYYNMWKMFNKDYNIRLFYDKNSLLVNTLKTAIIQESSKVIIEQNQSNILDGTYGHNKFYSDRMKLIYRYKRELKMLYENMKQNNSVDDIIINFLSNYFKYDIGKLNNQKENNNNKMIAIGATDINTENILTNKLKSYYYQELIQTNNLAAASDILRIAILKKYGGVYCDLDFLPGVNLSLFNDISKPNGMDSNYWEAAIFEAIANEKKLMNNYPYKYMEQVPSEIKERILSFVRNHDINDLILPLGDIKISQLEILLSRLKAATGKKTFSNAFIISNNDSLTLNNLISQLENRYEILNSIIQEKFKICETYDSYINSVSELVLETTPKNLSMDGSSFYQQIIGYLSSGFKPEVNSTVFFSGPNIYSSATCDTYHFIKNTFDMLSSQNQEIFEASNNLYFSKTHDEFKSSWLLRSNIAEKEFQKLIKTYIGRTLNYEDGLNFNKWKRVTTSELLKVIEEVNSTKIYENYDLNMILQIQGDDISYESAVNVFGKNPNKSILIQGVDDFANVFYFENGIVQSDNINNILSRFNDIKKIKLTLIGHGENVFNPKLFGGKTVNDLYTNIIKPKLQHLLEREGVILKNKYLKINILGCYMFTPKVDINSTFVGKLFNKISRDLQPKGFSKNQLEISANKYAIRINREGKREVLDYFGKWVSNTDLIAEQISNKYVVYWNEVENTLSARVEQLNKVAEFAKDINSIIQTTNNQELKQSLVNTYADLITTLYSELLKEDIPFELDNIQIKERIILNEISRLHDFSNIILDFYQKNNISNNMIILFDSIIKEKDYYNVKLANKITGETSVIKTYSDSLWNFTNKYKKIVDDIKGIIVKDINGEFIKKADFEIEQNPSLLNSAMLMQLLIDYKPYTEILTNMNTSLKVQAYAQIFQLSIGAIQEATEIVTIISDALNANFNILSKLKVGSSVASVIIDGINLIAALTELKNVKTNFERKLIEAKVGMYSIGFILESSSLISGLLGATAVSEILGVISVPVAGILVGLPSLVNNILVLGEKYNQILDYFSKFYPIVGKNPFSIQDNIIIPYDDIAITELNFKYNKFKYGYAKISGLKVGLVTHIGENIDHYFSAPSLDHYIELSIYPALKLNDTNLPKGNVVLLPSGLNKVYKPEISAIAGANSQEGNGVEVLNLIRNYYVDSNGNTKFPWKYEAPFEYSFSYMRVEYFDTKVNVILDNENKTLIIPVLTIDEMRNKISYEILGDGGQYNVILPVNQTNINIVSNKNDIWNFDVSYIVKESKIEDNKFVLDGFINNIFSTLKVSNDGFKIGKQFISIKNTPRAINLSFKINNNIVIVSIYLNHEKSNSITIISSDLNDIKNNFDNLLDNINYIGLGSISDNTINCIVRNDEVYMEGKIFLNEKKLVFIQNELELHLYDSVNKDSQYLINNPINNVVKYKDGYIVEGTFLINSTENKYSLYIENNKIMLKGLYLESSVFKTIQDKIYSKEKVNDYILSLIKKFFTVNIQLCPFMIVSGVDENNRYLEYMLSTNNKWIINGGYWENDFNNYKIVDFEKCNVIVSGSNKLNSEGDLADTIDVLDKDLENLYIDSVIIIPKVYTKKIIIHPIPNNPQINIINTQSIHDKCHLIIDSVLTNNYHWESDGDDLIITNGLDINIRILQGLSFGFKYKNIYLKFSNYDELSLNDFLLQNYNVKGLYYINGELHYKNIPGDTFEYGWINIDSRWYFFDSINLIAKKGYQEIEGERYYFNPNTGVQESGVFLTPNGLEYFTNKHASSKRWGRAINYTGWLTLDGNKYYFQSNSKAVTGLQKISDKYYYFNDNGQMQIKWQIINNNKYYFDGNTGEAIIGWFNNNKERYYFDSEGRLLTGYQVIGDKSYYFSDNINGNWEEGSGVLKSGIFKTPSGFKLFSSEGDKSAINYKGWLDLNGNKYYFNSDSIAVTGSYNIKGIQYYFNPKTAVLTNGWYTLDNNNYYVSNGHNVLGYQDIDGKGYYFDPSTGIQKAGVFPTPNGLRYFTMKPIDGQRWGQCIDYTGWLHLNGNKYYFGYYNSAVTGWRVLGGKRYFFNIKTGAATTGLLTLSGKRYYFNEKGEQLTLV</sequence>
<accession>Q46149</accession>
<accession>Q46147</accession>
<accession>Q46148</accession>
<accession>Q798V1</accession>
<organism>
    <name type="scientific">Clostridium novyi</name>
    <dbReference type="NCBI Taxonomy" id="1542"/>
    <lineage>
        <taxon>Bacteria</taxon>
        <taxon>Bacillati</taxon>
        <taxon>Bacillota</taxon>
        <taxon>Clostridia</taxon>
        <taxon>Eubacteriales</taxon>
        <taxon>Clostridiaceae</taxon>
        <taxon>Clostridium</taxon>
    </lineage>
</organism>
<dbReference type="EC" id="3.4.22.-" evidence="8"/>
<dbReference type="EC" id="2.4.1.-" evidence="7 10"/>
<dbReference type="EMBL" id="Z23281">
    <property type="protein sequence ID" value="CAA80819.1"/>
    <property type="molecule type" value="Genomic_DNA"/>
</dbReference>
<dbReference type="EMBL" id="Z48636">
    <property type="protein sequence ID" value="CAA88565.1"/>
    <property type="molecule type" value="Genomic_DNA"/>
</dbReference>
<dbReference type="PIR" id="S55805">
    <property type="entry name" value="S55805"/>
</dbReference>
<dbReference type="PDB" id="2VK9">
    <property type="method" value="X-ray"/>
    <property type="resolution" value="2.85 A"/>
    <property type="chains" value="A=1-551"/>
</dbReference>
<dbReference type="PDBsum" id="2VK9"/>
<dbReference type="SMR" id="Q46149"/>
<dbReference type="CAZy" id="GT44">
    <property type="family name" value="Glycosyltransferase Family 44"/>
</dbReference>
<dbReference type="TCDB" id="1.C.57.1.4">
    <property type="family name" value="the clostridial cytotoxin (cct) family"/>
</dbReference>
<dbReference type="BRENDA" id="2.4.1.B62">
    <property type="organism ID" value="1497"/>
</dbReference>
<dbReference type="EvolutionaryTrace" id="Q46149"/>
<dbReference type="GO" id="GO:0005576">
    <property type="term" value="C:extracellular region"/>
    <property type="evidence" value="ECO:0007669"/>
    <property type="project" value="UniProtKB-SubCell"/>
</dbReference>
<dbReference type="GO" id="GO:0044164">
    <property type="term" value="C:host cell cytosol"/>
    <property type="evidence" value="ECO:0007669"/>
    <property type="project" value="UniProtKB-SubCell"/>
</dbReference>
<dbReference type="GO" id="GO:0044175">
    <property type="term" value="C:host cell endosome membrane"/>
    <property type="evidence" value="ECO:0007669"/>
    <property type="project" value="UniProtKB-SubCell"/>
</dbReference>
<dbReference type="GO" id="GO:0020002">
    <property type="term" value="C:host cell plasma membrane"/>
    <property type="evidence" value="ECO:0007669"/>
    <property type="project" value="UniProtKB-SubCell"/>
</dbReference>
<dbReference type="GO" id="GO:0016020">
    <property type="term" value="C:membrane"/>
    <property type="evidence" value="ECO:0007669"/>
    <property type="project" value="UniProtKB-KW"/>
</dbReference>
<dbReference type="GO" id="GO:0008234">
    <property type="term" value="F:cysteine-type peptidase activity"/>
    <property type="evidence" value="ECO:0007669"/>
    <property type="project" value="UniProtKB-KW"/>
</dbReference>
<dbReference type="GO" id="GO:0016757">
    <property type="term" value="F:glycosyltransferase activity"/>
    <property type="evidence" value="ECO:0007669"/>
    <property type="project" value="UniProtKB-KW"/>
</dbReference>
<dbReference type="GO" id="GO:0008289">
    <property type="term" value="F:lipid binding"/>
    <property type="evidence" value="ECO:0007669"/>
    <property type="project" value="UniProtKB-KW"/>
</dbReference>
<dbReference type="GO" id="GO:0046872">
    <property type="term" value="F:metal ion binding"/>
    <property type="evidence" value="ECO:0007669"/>
    <property type="project" value="UniProtKB-KW"/>
</dbReference>
<dbReference type="GO" id="GO:0090729">
    <property type="term" value="F:toxin activity"/>
    <property type="evidence" value="ECO:0007669"/>
    <property type="project" value="UniProtKB-KW"/>
</dbReference>
<dbReference type="GO" id="GO:0006508">
    <property type="term" value="P:proteolysis"/>
    <property type="evidence" value="ECO:0007669"/>
    <property type="project" value="UniProtKB-KW"/>
</dbReference>
<dbReference type="GO" id="GO:0044082">
    <property type="term" value="P:symbiont-mediated perturbation of host small GTPase-mediated signal transduction"/>
    <property type="evidence" value="ECO:0000269"/>
    <property type="project" value="SigSci"/>
</dbReference>
<dbReference type="CDD" id="cd20502">
    <property type="entry name" value="C80_toxinA_B-like"/>
    <property type="match status" value="1"/>
</dbReference>
<dbReference type="CDD" id="cd16840">
    <property type="entry name" value="toxin_MLD"/>
    <property type="match status" value="1"/>
</dbReference>
<dbReference type="Gene3D" id="1.10.274.80">
    <property type="match status" value="1"/>
</dbReference>
<dbReference type="Gene3D" id="1.10.3730.30">
    <property type="match status" value="1"/>
</dbReference>
<dbReference type="Gene3D" id="1.20.58.1190">
    <property type="match status" value="1"/>
</dbReference>
<dbReference type="Gene3D" id="3.40.50.11050">
    <property type="match status" value="1"/>
</dbReference>
<dbReference type="Gene3D" id="2.10.270.10">
    <property type="entry name" value="Cholin Binding"/>
    <property type="match status" value="5"/>
</dbReference>
<dbReference type="InterPro" id="IPR018337">
    <property type="entry name" value="Cell_wall/Cho-bd_repeat"/>
</dbReference>
<dbReference type="InterPro" id="IPR020974">
    <property type="entry name" value="CPD_dom"/>
</dbReference>
<dbReference type="InterPro" id="IPR038383">
    <property type="entry name" value="CPD_dom_sf"/>
</dbReference>
<dbReference type="InterPro" id="IPR029044">
    <property type="entry name" value="Nucleotide-diphossugar_trans"/>
</dbReference>
<dbReference type="InterPro" id="IPR024770">
    <property type="entry name" value="TcdA/TcdB_cat"/>
</dbReference>
<dbReference type="InterPro" id="IPR024772">
    <property type="entry name" value="TcdA/TcdB_N"/>
</dbReference>
<dbReference type="InterPro" id="IPR024769">
    <property type="entry name" value="TcdA/TcdB_pore_forming"/>
</dbReference>
<dbReference type="Pfam" id="PF01473">
    <property type="entry name" value="Choline_bind_1"/>
    <property type="match status" value="5"/>
</dbReference>
<dbReference type="Pfam" id="PF19127">
    <property type="entry name" value="Choline_bind_3"/>
    <property type="match status" value="1"/>
</dbReference>
<dbReference type="Pfam" id="PF11713">
    <property type="entry name" value="Peptidase_C80"/>
    <property type="match status" value="1"/>
</dbReference>
<dbReference type="Pfam" id="PF12919">
    <property type="entry name" value="TcdA_TcdB"/>
    <property type="match status" value="1"/>
</dbReference>
<dbReference type="Pfam" id="PF12920">
    <property type="entry name" value="TcdA_TcdB_pore"/>
    <property type="match status" value="1"/>
</dbReference>
<dbReference type="Pfam" id="PF12918">
    <property type="entry name" value="TcdB_N"/>
    <property type="match status" value="1"/>
</dbReference>
<dbReference type="SUPFAM" id="SSF69360">
    <property type="entry name" value="Cell wall binding repeat"/>
    <property type="match status" value="3"/>
</dbReference>
<dbReference type="SUPFAM" id="SSF53448">
    <property type="entry name" value="Nucleotide-diphospho-sugar transferases"/>
    <property type="match status" value="1"/>
</dbReference>
<dbReference type="PROSITE" id="PS51771">
    <property type="entry name" value="CGT_MARTX_CPD"/>
    <property type="match status" value="1"/>
</dbReference>
<dbReference type="PROSITE" id="PS51170">
    <property type="entry name" value="CW"/>
    <property type="match status" value="14"/>
</dbReference>